<evidence type="ECO:0000250" key="1"/>
<evidence type="ECO:0000256" key="2">
    <source>
        <dbReference type="SAM" id="MobiDB-lite"/>
    </source>
</evidence>
<evidence type="ECO:0000305" key="3"/>
<protein>
    <recommendedName>
        <fullName>Chaperone protein DnaK</fullName>
    </recommendedName>
    <alternativeName>
        <fullName>75 kDa membrane protein</fullName>
    </alternativeName>
    <alternativeName>
        <fullName>HSP70</fullName>
    </alternativeName>
    <alternativeName>
        <fullName>Heat shock 70 kDa protein</fullName>
    </alternativeName>
    <alternativeName>
        <fullName>Heat shock protein 70</fullName>
    </alternativeName>
</protein>
<name>DNAK_CHLPN</name>
<keyword id="KW-0067">ATP-binding</keyword>
<keyword id="KW-0143">Chaperone</keyword>
<keyword id="KW-0547">Nucleotide-binding</keyword>
<keyword id="KW-0597">Phosphoprotein</keyword>
<keyword id="KW-0346">Stress response</keyword>
<gene>
    <name type="primary">dnaK</name>
    <name type="ordered locus">CPn_0503</name>
    <name type="ordered locus">CP_0251</name>
    <name type="ordered locus">CpB0523</name>
</gene>
<organism>
    <name type="scientific">Chlamydia pneumoniae</name>
    <name type="common">Chlamydophila pneumoniae</name>
    <dbReference type="NCBI Taxonomy" id="83558"/>
    <lineage>
        <taxon>Bacteria</taxon>
        <taxon>Pseudomonadati</taxon>
        <taxon>Chlamydiota</taxon>
        <taxon>Chlamydiia</taxon>
        <taxon>Chlamydiales</taxon>
        <taxon>Chlamydiaceae</taxon>
        <taxon>Chlamydia/Chlamydophila group</taxon>
        <taxon>Chlamydia</taxon>
    </lineage>
</organism>
<accession>P27542</accession>
<accession>Q9JQ25</accession>
<sequence length="660" mass="71354">MSEHKKSSKIIGIDLGTTNSCVSVMEGGQAKVITSSEGTRTTPSIVAFKGNEKLVGIPAKRQAVTNPEKTLGSTKRFIGRKYSEVASEIQTVPYTVTSGSKGDAVFEVDGKQYTPEEIGAQILMKMKETAEAYLGETVTEAVITVPAYFNDSQRASTKDAGRIAGLDVKRIIPEPTAAALAYGIDKVGDKKIAVFDLGGGTFDISILEIGDGVFEVLSTNGDTLLGGDDFDEVIIKWMIEEFKKQEGIDLSKDNMALQRLKDAAEKAKIELSGVSSTEINQPFITMDAQGPKHLALTLTRAQFEKLAASLIERTKSPCIKALSDAKLSAKDIDDVLLVGGMSRMPAVQETVKELFGKEPNKGVNPDEVVAIGAAIQGGVLGGEVKDVLLLDVIPLSLGIETLGGVMTTLVERNTTIPTQKKQIFSTAADNQPAVTIVVLQGERPMAKDNKEIGRFDLTDIPPAPRGHPQIEVSFDIDANGIFHVSAKDVASGKEQKIRIEASSGLQEDEIQRMVRDAEINKEEDKKRREASDAKNEADSMIFRAEKAIKDYKEQIPETLVKEIEERIENVRNALKDDAPIEKIKEVTEDLSKHMQKIGESMQSQSASAAASSAANAKGGPNINTEDLKKHSFSTKPPSNNGSSEDHIEEADVEIIDNDDK</sequence>
<dbReference type="EMBL" id="M69227">
    <property type="protein sequence ID" value="AAA23121.1"/>
    <property type="molecule type" value="Genomic_DNA"/>
</dbReference>
<dbReference type="EMBL" id="AE001363">
    <property type="protein sequence ID" value="AAD18643.1"/>
    <property type="molecule type" value="Genomic_DNA"/>
</dbReference>
<dbReference type="EMBL" id="AE002161">
    <property type="protein sequence ID" value="AAF38114.1"/>
    <property type="molecule type" value="Genomic_DNA"/>
</dbReference>
<dbReference type="EMBL" id="BA000008">
    <property type="protein sequence ID" value="BAA98709.1"/>
    <property type="molecule type" value="Genomic_DNA"/>
</dbReference>
<dbReference type="EMBL" id="AE009440">
    <property type="protein sequence ID" value="AAP98452.1"/>
    <property type="molecule type" value="Genomic_DNA"/>
</dbReference>
<dbReference type="PIR" id="C86553">
    <property type="entry name" value="C86553"/>
</dbReference>
<dbReference type="PIR" id="S16159">
    <property type="entry name" value="S16159"/>
</dbReference>
<dbReference type="RefSeq" id="NP_224699.1">
    <property type="nucleotide sequence ID" value="NC_000922.1"/>
</dbReference>
<dbReference type="RefSeq" id="WP_010883141.1">
    <property type="nucleotide sequence ID" value="NZ_LN847257.1"/>
</dbReference>
<dbReference type="SMR" id="P27542"/>
<dbReference type="STRING" id="406984.CPK_ORF01019"/>
<dbReference type="GeneID" id="45050546"/>
<dbReference type="KEGG" id="cpa:CP_0251"/>
<dbReference type="KEGG" id="cpj:dnaK"/>
<dbReference type="KEGG" id="cpn:CPn_0503"/>
<dbReference type="KEGG" id="cpt:CpB0523"/>
<dbReference type="PATRIC" id="fig|115713.3.peg.562"/>
<dbReference type="eggNOG" id="COG0443">
    <property type="taxonomic scope" value="Bacteria"/>
</dbReference>
<dbReference type="HOGENOM" id="CLU_005965_2_1_0"/>
<dbReference type="OrthoDB" id="9766019at2"/>
<dbReference type="Proteomes" id="UP000000583">
    <property type="component" value="Chromosome"/>
</dbReference>
<dbReference type="Proteomes" id="UP000000801">
    <property type="component" value="Chromosome"/>
</dbReference>
<dbReference type="GO" id="GO:0020003">
    <property type="term" value="C:symbiont-containing vacuole"/>
    <property type="evidence" value="ECO:0000314"/>
    <property type="project" value="CAFA"/>
</dbReference>
<dbReference type="GO" id="GO:0005524">
    <property type="term" value="F:ATP binding"/>
    <property type="evidence" value="ECO:0007669"/>
    <property type="project" value="UniProtKB-UniRule"/>
</dbReference>
<dbReference type="GO" id="GO:0140662">
    <property type="term" value="F:ATP-dependent protein folding chaperone"/>
    <property type="evidence" value="ECO:0007669"/>
    <property type="project" value="InterPro"/>
</dbReference>
<dbReference type="GO" id="GO:0051082">
    <property type="term" value="F:unfolded protein binding"/>
    <property type="evidence" value="ECO:0007669"/>
    <property type="project" value="InterPro"/>
</dbReference>
<dbReference type="CDD" id="cd10234">
    <property type="entry name" value="ASKHA_NBD_HSP70_DnaK-like"/>
    <property type="match status" value="1"/>
</dbReference>
<dbReference type="FunFam" id="2.60.34.10:FF:000014">
    <property type="entry name" value="Chaperone protein DnaK HSP70"/>
    <property type="match status" value="1"/>
</dbReference>
<dbReference type="FunFam" id="1.20.1270.10:FF:000001">
    <property type="entry name" value="Molecular chaperone DnaK"/>
    <property type="match status" value="1"/>
</dbReference>
<dbReference type="FunFam" id="3.30.420.40:FF:000004">
    <property type="entry name" value="Molecular chaperone DnaK"/>
    <property type="match status" value="1"/>
</dbReference>
<dbReference type="FunFam" id="3.90.640.10:FF:000003">
    <property type="entry name" value="Molecular chaperone DnaK"/>
    <property type="match status" value="1"/>
</dbReference>
<dbReference type="Gene3D" id="1.20.1270.10">
    <property type="match status" value="1"/>
</dbReference>
<dbReference type="Gene3D" id="3.30.420.40">
    <property type="match status" value="2"/>
</dbReference>
<dbReference type="Gene3D" id="3.90.640.10">
    <property type="entry name" value="Actin, Chain A, domain 4"/>
    <property type="match status" value="1"/>
</dbReference>
<dbReference type="Gene3D" id="2.60.34.10">
    <property type="entry name" value="Substrate Binding Domain Of DNAk, Chain A, domain 1"/>
    <property type="match status" value="1"/>
</dbReference>
<dbReference type="HAMAP" id="MF_00332">
    <property type="entry name" value="DnaK"/>
    <property type="match status" value="1"/>
</dbReference>
<dbReference type="InterPro" id="IPR043129">
    <property type="entry name" value="ATPase_NBD"/>
</dbReference>
<dbReference type="InterPro" id="IPR012725">
    <property type="entry name" value="Chaperone_DnaK"/>
</dbReference>
<dbReference type="InterPro" id="IPR018181">
    <property type="entry name" value="Heat_shock_70_CS"/>
</dbReference>
<dbReference type="InterPro" id="IPR029048">
    <property type="entry name" value="HSP70_C_sf"/>
</dbReference>
<dbReference type="InterPro" id="IPR029047">
    <property type="entry name" value="HSP70_peptide-bd_sf"/>
</dbReference>
<dbReference type="InterPro" id="IPR013126">
    <property type="entry name" value="Hsp_70_fam"/>
</dbReference>
<dbReference type="NCBIfam" id="NF001413">
    <property type="entry name" value="PRK00290.1"/>
    <property type="match status" value="1"/>
</dbReference>
<dbReference type="NCBIfam" id="TIGR02350">
    <property type="entry name" value="prok_dnaK"/>
    <property type="match status" value="1"/>
</dbReference>
<dbReference type="PANTHER" id="PTHR19375">
    <property type="entry name" value="HEAT SHOCK PROTEIN 70KDA"/>
    <property type="match status" value="1"/>
</dbReference>
<dbReference type="Pfam" id="PF00012">
    <property type="entry name" value="HSP70"/>
    <property type="match status" value="1"/>
</dbReference>
<dbReference type="PRINTS" id="PR00301">
    <property type="entry name" value="HEATSHOCK70"/>
</dbReference>
<dbReference type="SUPFAM" id="SSF53067">
    <property type="entry name" value="Actin-like ATPase domain"/>
    <property type="match status" value="2"/>
</dbReference>
<dbReference type="SUPFAM" id="SSF100934">
    <property type="entry name" value="Heat shock protein 70kD (HSP70), C-terminal subdomain"/>
    <property type="match status" value="1"/>
</dbReference>
<dbReference type="SUPFAM" id="SSF100920">
    <property type="entry name" value="Heat shock protein 70kD (HSP70), peptide-binding domain"/>
    <property type="match status" value="1"/>
</dbReference>
<dbReference type="PROSITE" id="PS00297">
    <property type="entry name" value="HSP70_1"/>
    <property type="match status" value="1"/>
</dbReference>
<dbReference type="PROSITE" id="PS00329">
    <property type="entry name" value="HSP70_2"/>
    <property type="match status" value="1"/>
</dbReference>
<dbReference type="PROSITE" id="PS01036">
    <property type="entry name" value="HSP70_3"/>
    <property type="match status" value="1"/>
</dbReference>
<comment type="function">
    <text evidence="1">Acts as a chaperone.</text>
</comment>
<comment type="induction">
    <text evidence="1">By stress conditions e.g. heat shock (By similarity).</text>
</comment>
<comment type="miscellaneous">
    <text>Expressed early during infection.</text>
</comment>
<comment type="similarity">
    <text evidence="3">Belongs to the heat shock protein 70 family.</text>
</comment>
<feature type="chain" id="PRO_0000078444" description="Chaperone protein DnaK">
    <location>
        <begin position="1"/>
        <end position="660"/>
    </location>
</feature>
<feature type="region of interest" description="Disordered" evidence="2">
    <location>
        <begin position="591"/>
        <end position="660"/>
    </location>
</feature>
<feature type="compositionally biased region" description="Low complexity" evidence="2">
    <location>
        <begin position="600"/>
        <end position="614"/>
    </location>
</feature>
<feature type="compositionally biased region" description="Polar residues" evidence="2">
    <location>
        <begin position="633"/>
        <end position="642"/>
    </location>
</feature>
<feature type="compositionally biased region" description="Acidic residues" evidence="2">
    <location>
        <begin position="646"/>
        <end position="660"/>
    </location>
</feature>
<feature type="modified residue" description="Phosphothreonine; by autocatalysis" evidence="1">
    <location>
        <position position="201"/>
    </location>
</feature>
<reference key="1">
    <citation type="journal article" date="1991" name="Infect. Immun.">
        <title>Sequence analysis of the gene encoding the Chlamydia pneumoniae DnaK protein homolog.</title>
        <authorList>
            <person name="Kornak J.M."/>
            <person name="Kuo C.C."/>
            <person name="Campbell L.A."/>
        </authorList>
    </citation>
    <scope>NUCLEOTIDE SEQUENCE [GENOMIC DNA]</scope>
    <source>
        <strain>TWAR</strain>
    </source>
</reference>
<reference key="2">
    <citation type="journal article" date="1999" name="Nat. Genet.">
        <title>Comparative genomes of Chlamydia pneumoniae and C. trachomatis.</title>
        <authorList>
            <person name="Kalman S."/>
            <person name="Mitchell W.P."/>
            <person name="Marathe R."/>
            <person name="Lammel C.J."/>
            <person name="Fan J."/>
            <person name="Hyman R.W."/>
            <person name="Olinger L."/>
            <person name="Grimwood J."/>
            <person name="Davis R.W."/>
            <person name="Stephens R.S."/>
        </authorList>
    </citation>
    <scope>NUCLEOTIDE SEQUENCE [LARGE SCALE GENOMIC DNA]</scope>
    <source>
        <strain>CWL029</strain>
    </source>
</reference>
<reference key="3">
    <citation type="journal article" date="2000" name="Nucleic Acids Res.">
        <title>Genome sequences of Chlamydia trachomatis MoPn and Chlamydia pneumoniae AR39.</title>
        <authorList>
            <person name="Read T.D."/>
            <person name="Brunham R.C."/>
            <person name="Shen C."/>
            <person name="Gill S.R."/>
            <person name="Heidelberg J.F."/>
            <person name="White O."/>
            <person name="Hickey E.K."/>
            <person name="Peterson J.D."/>
            <person name="Utterback T.R."/>
            <person name="Berry K.J."/>
            <person name="Bass S."/>
            <person name="Linher K.D."/>
            <person name="Weidman J.F."/>
            <person name="Khouri H.M."/>
            <person name="Craven B."/>
            <person name="Bowman C."/>
            <person name="Dodson R.J."/>
            <person name="Gwinn M.L."/>
            <person name="Nelson W.C."/>
            <person name="DeBoy R.T."/>
            <person name="Kolonay J.F."/>
            <person name="McClarty G."/>
            <person name="Salzberg S.L."/>
            <person name="Eisen J.A."/>
            <person name="Fraser C.M."/>
        </authorList>
    </citation>
    <scope>NUCLEOTIDE SEQUENCE [LARGE SCALE GENOMIC DNA]</scope>
    <source>
        <strain>AR39</strain>
    </source>
</reference>
<reference key="4">
    <citation type="journal article" date="2000" name="Nucleic Acids Res.">
        <title>Comparison of whole genome sequences of Chlamydia pneumoniae J138 from Japan and CWL029 from USA.</title>
        <authorList>
            <person name="Shirai M."/>
            <person name="Hirakawa H."/>
            <person name="Kimoto M."/>
            <person name="Tabuchi M."/>
            <person name="Kishi F."/>
            <person name="Ouchi K."/>
            <person name="Shiba T."/>
            <person name="Ishii K."/>
            <person name="Hattori M."/>
            <person name="Kuhara S."/>
            <person name="Nakazawa T."/>
        </authorList>
    </citation>
    <scope>NUCLEOTIDE SEQUENCE [LARGE SCALE GENOMIC DNA]</scope>
    <source>
        <strain>J138</strain>
    </source>
</reference>
<reference key="5">
    <citation type="submission" date="2002-05" db="EMBL/GenBank/DDBJ databases">
        <title>The genome sequence of Chlamydia pneumoniae TW183 and comparison with other Chlamydia strains based on whole genome sequence analysis.</title>
        <authorList>
            <person name="Geng M.M."/>
            <person name="Schuhmacher A."/>
            <person name="Muehldorfer I."/>
            <person name="Bensch K.W."/>
            <person name="Schaefer K.P."/>
            <person name="Schneider S."/>
            <person name="Pohl T."/>
            <person name="Essig A."/>
            <person name="Marre R."/>
            <person name="Melchers K."/>
        </authorList>
    </citation>
    <scope>NUCLEOTIDE SEQUENCE [LARGE SCALE GENOMIC DNA]</scope>
    <source>
        <strain>TW-183</strain>
    </source>
</reference>
<proteinExistence type="inferred from homology"/>